<evidence type="ECO:0000269" key="1">
    <source>
    </source>
</evidence>
<evidence type="ECO:0000303" key="2">
    <source>
    </source>
</evidence>
<evidence type="ECO:0000305" key="3"/>
<evidence type="ECO:0000305" key="4">
    <source>
    </source>
</evidence>
<evidence type="ECO:0000312" key="5">
    <source>
        <dbReference type="EMBL" id="AAQ59368.1"/>
    </source>
</evidence>
<evidence type="ECO:0000312" key="6">
    <source>
        <dbReference type="Proteomes" id="UP000001424"/>
    </source>
</evidence>
<evidence type="ECO:0007744" key="7">
    <source>
        <dbReference type="PDB" id="2YB1"/>
    </source>
</evidence>
<evidence type="ECO:0007744" key="8">
    <source>
        <dbReference type="PDB" id="2YB4"/>
    </source>
</evidence>
<evidence type="ECO:0007829" key="9">
    <source>
        <dbReference type="PDB" id="2YB1"/>
    </source>
</evidence>
<evidence type="ECO:0007829" key="10">
    <source>
        <dbReference type="PDB" id="2YB4"/>
    </source>
</evidence>
<feature type="chain" id="PRO_0000433638" description="3',5'-nucleoside bisphosphate phosphatase">
    <location>
        <begin position="1"/>
        <end position="285"/>
    </location>
</feature>
<feature type="binding site" evidence="1 7">
    <location>
        <position position="7"/>
    </location>
    <ligand>
        <name>Mn(2+)</name>
        <dbReference type="ChEBI" id="CHEBI:29035"/>
        <label>1</label>
    </ligand>
</feature>
<feature type="binding site" evidence="1 7">
    <location>
        <position position="9"/>
    </location>
    <ligand>
        <name>Mn(2+)</name>
        <dbReference type="ChEBI" id="CHEBI:29035"/>
        <label>1</label>
    </ligand>
</feature>
<feature type="binding site" evidence="1 7">
    <location>
        <position position="14"/>
    </location>
    <ligand>
        <name>Mn(2+)</name>
        <dbReference type="ChEBI" id="CHEBI:29035"/>
        <label>2</label>
    </ligand>
</feature>
<feature type="binding site" evidence="1 7">
    <location>
        <position position="14"/>
    </location>
    <ligand>
        <name>substrate</name>
    </ligand>
</feature>
<feature type="binding site" evidence="1 7">
    <location>
        <position position="39"/>
    </location>
    <ligand>
        <name>Mn(2+)</name>
        <dbReference type="ChEBI" id="CHEBI:29035"/>
        <label>2</label>
    </ligand>
</feature>
<feature type="binding site" evidence="1 7">
    <location>
        <position position="39"/>
    </location>
    <ligand>
        <name>substrate</name>
    </ligand>
</feature>
<feature type="binding site" evidence="1 7">
    <location>
        <position position="64"/>
    </location>
    <ligand>
        <name>Mn(2+)</name>
        <dbReference type="ChEBI" id="CHEBI:29035"/>
        <label>1</label>
    </ligand>
</feature>
<feature type="binding site" evidence="1 7">
    <location>
        <position position="64"/>
    </location>
    <ligand>
        <name>Mn(2+)</name>
        <dbReference type="ChEBI" id="CHEBI:29035"/>
        <label>3</label>
    </ligand>
</feature>
<feature type="binding site" evidence="1 7">
    <location>
        <position position="75"/>
    </location>
    <ligand>
        <name>Mn(2+)</name>
        <dbReference type="ChEBI" id="CHEBI:29035"/>
        <label>3</label>
    </ligand>
</feature>
<feature type="binding site" evidence="1 7">
    <location>
        <begin position="99"/>
        <end position="102"/>
    </location>
    <ligand>
        <name>substrate</name>
    </ligand>
</feature>
<feature type="binding site" evidence="1 7">
    <location>
        <begin position="134"/>
        <end position="135"/>
    </location>
    <ligand>
        <name>substrate</name>
    </ligand>
</feature>
<feature type="binding site" evidence="1 7">
    <location>
        <position position="191"/>
    </location>
    <ligand>
        <name>Mn(2+)</name>
        <dbReference type="ChEBI" id="CHEBI:29035"/>
        <label>3</label>
    </ligand>
</feature>
<feature type="binding site" evidence="1 7">
    <location>
        <position position="248"/>
    </location>
    <ligand>
        <name>Mn(2+)</name>
        <dbReference type="ChEBI" id="CHEBI:29035"/>
        <label>1</label>
    </ligand>
</feature>
<feature type="binding site" evidence="1 7">
    <location>
        <position position="250"/>
    </location>
    <ligand>
        <name>Mn(2+)</name>
        <dbReference type="ChEBI" id="CHEBI:29035"/>
        <label>2</label>
    </ligand>
</feature>
<feature type="binding site" evidence="1 7">
    <location>
        <position position="250"/>
    </location>
    <ligand>
        <name>substrate</name>
    </ligand>
</feature>
<feature type="turn" evidence="9">
    <location>
        <begin position="11"/>
        <end position="14"/>
    </location>
</feature>
<feature type="helix" evidence="9">
    <location>
        <begin position="19"/>
        <end position="27"/>
    </location>
</feature>
<feature type="strand" evidence="9">
    <location>
        <begin position="32"/>
        <end position="36"/>
    </location>
</feature>
<feature type="helix" evidence="9">
    <location>
        <begin position="45"/>
        <end position="54"/>
    </location>
</feature>
<feature type="strand" evidence="9">
    <location>
        <begin position="59"/>
        <end position="69"/>
    </location>
</feature>
<feature type="strand" evidence="9">
    <location>
        <begin position="72"/>
        <end position="80"/>
    </location>
</feature>
<feature type="helix" evidence="9">
    <location>
        <begin position="86"/>
        <end position="96"/>
    </location>
</feature>
<feature type="helix" evidence="9">
    <location>
        <begin position="99"/>
        <end position="112"/>
    </location>
</feature>
<feature type="helix" evidence="9">
    <location>
        <begin position="118"/>
        <end position="123"/>
    </location>
</feature>
<feature type="helix" evidence="9">
    <location>
        <begin position="129"/>
        <end position="131"/>
    </location>
</feature>
<feature type="helix" evidence="9">
    <location>
        <begin position="134"/>
        <end position="143"/>
    </location>
</feature>
<feature type="strand" evidence="9">
    <location>
        <begin position="146"/>
        <end position="149"/>
    </location>
</feature>
<feature type="helix" evidence="9">
    <location>
        <begin position="150"/>
        <end position="156"/>
    </location>
</feature>
<feature type="strand" evidence="9">
    <location>
        <begin position="157"/>
        <end position="159"/>
    </location>
</feature>
<feature type="helix" evidence="9">
    <location>
        <begin position="173"/>
        <end position="182"/>
    </location>
</feature>
<feature type="strand" evidence="9">
    <location>
        <begin position="186"/>
        <end position="189"/>
    </location>
</feature>
<feature type="helix" evidence="9">
    <location>
        <begin position="192"/>
        <end position="194"/>
    </location>
</feature>
<feature type="helix" evidence="9">
    <location>
        <begin position="199"/>
        <end position="211"/>
    </location>
</feature>
<feature type="strand" evidence="9">
    <location>
        <begin position="216"/>
        <end position="221"/>
    </location>
</feature>
<feature type="helix" evidence="9">
    <location>
        <begin position="226"/>
        <end position="239"/>
    </location>
</feature>
<feature type="strand" evidence="9">
    <location>
        <begin position="242"/>
        <end position="246"/>
    </location>
</feature>
<feature type="helix" evidence="9">
    <location>
        <begin position="272"/>
        <end position="275"/>
    </location>
</feature>
<feature type="helix" evidence="9">
    <location>
        <begin position="277"/>
        <end position="279"/>
    </location>
</feature>
<feature type="strand" evidence="10">
    <location>
        <begin position="283"/>
        <end position="285"/>
    </location>
</feature>
<gene>
    <name evidence="5" type="ordered locus">CV_1693</name>
</gene>
<name>35NBP_CHRVO</name>
<protein>
    <recommendedName>
        <fullName evidence="2">3',5'-nucleoside bisphosphate phosphatase</fullName>
        <ecNumber evidence="1">3.1.3.97</ecNumber>
    </recommendedName>
</protein>
<keyword id="KW-0002">3D-structure</keyword>
<keyword id="KW-0378">Hydrolase</keyword>
<keyword id="KW-0464">Manganese</keyword>
<keyword id="KW-0479">Metal-binding</keyword>
<keyword id="KW-0547">Nucleotide-binding</keyword>
<keyword id="KW-1185">Reference proteome</keyword>
<reference key="1">
    <citation type="journal article" date="2003" name="Proc. Natl. Acad. Sci. U.S.A.">
        <title>The complete genome sequence of Chromobacterium violaceum reveals remarkable and exploitable bacterial adaptability.</title>
        <authorList>
            <person name="Vasconcelos A.T.R."/>
            <person name="de Almeida D.F."/>
            <person name="Hungria M."/>
            <person name="Guimaraes C.T."/>
            <person name="Antonio R.V."/>
            <person name="Almeida F.C."/>
            <person name="de Almeida L.G.P."/>
            <person name="de Almeida R."/>
            <person name="Alves-Gomes J.A."/>
            <person name="Andrade E.M."/>
            <person name="Araripe J."/>
            <person name="de Araujo M.F.F."/>
            <person name="Astolfi-Filho S."/>
            <person name="Azevedo V."/>
            <person name="Baptista A.J."/>
            <person name="Bataus L.A.M."/>
            <person name="Batista J.S."/>
            <person name="Belo A."/>
            <person name="van den Berg C."/>
            <person name="Bogo M."/>
            <person name="Bonatto S."/>
            <person name="Bordignon J."/>
            <person name="Brigido M.M."/>
            <person name="Brito C.A."/>
            <person name="Brocchi M."/>
            <person name="Burity H.A."/>
            <person name="Camargo A.A."/>
            <person name="Cardoso D.D.P."/>
            <person name="Carneiro N.P."/>
            <person name="Carraro D.M."/>
            <person name="Carvalho C.M.B."/>
            <person name="Cascardo J.C.M."/>
            <person name="Cavada B.S."/>
            <person name="Chueire L.M.O."/>
            <person name="Creczynski-Pasa T.B."/>
            <person name="Cunha-Junior N.C."/>
            <person name="Fagundes N."/>
            <person name="Falcao C.L."/>
            <person name="Fantinatti F."/>
            <person name="Farias I.P."/>
            <person name="Felipe M.S.S."/>
            <person name="Ferrari L.P."/>
            <person name="Ferro J.A."/>
            <person name="Ferro M.I.T."/>
            <person name="Franco G.R."/>
            <person name="Freitas N.S.A."/>
            <person name="Furlan L.R."/>
            <person name="Gazzinelli R.T."/>
            <person name="Gomes E.A."/>
            <person name="Goncalves P.R."/>
            <person name="Grangeiro T.B."/>
            <person name="Grattapaglia D."/>
            <person name="Grisard E.C."/>
            <person name="Hanna E.S."/>
            <person name="Jardim S.N."/>
            <person name="Laurino J."/>
            <person name="Leoi L.C.T."/>
            <person name="Lima L.F.A."/>
            <person name="Loureiro M.F."/>
            <person name="Lyra M.C.C.P."/>
            <person name="Madeira H.M.F."/>
            <person name="Manfio G.P."/>
            <person name="Maranhao A.Q."/>
            <person name="Martins W.S."/>
            <person name="di Mauro S.M.Z."/>
            <person name="de Medeiros S.R.B."/>
            <person name="Meissner R.V."/>
            <person name="Moreira M.A.M."/>
            <person name="Nascimento F.F."/>
            <person name="Nicolas M.F."/>
            <person name="Oliveira J.G."/>
            <person name="Oliveira S.C."/>
            <person name="Paixao R.F.C."/>
            <person name="Parente J.A."/>
            <person name="Pedrosa F.O."/>
            <person name="Pena S.D.J."/>
            <person name="Pereira J.O."/>
            <person name="Pereira M."/>
            <person name="Pinto L.S.R.C."/>
            <person name="Pinto L.S."/>
            <person name="Porto J.I.R."/>
            <person name="Potrich D.P."/>
            <person name="Ramalho-Neto C.E."/>
            <person name="Reis A.M.M."/>
            <person name="Rigo L.U."/>
            <person name="Rondinelli E."/>
            <person name="Santos E.B.P."/>
            <person name="Santos F.R."/>
            <person name="Schneider M.P.C."/>
            <person name="Seuanez H.N."/>
            <person name="Silva A.M.R."/>
            <person name="da Silva A.L.C."/>
            <person name="Silva D.W."/>
            <person name="Silva R."/>
            <person name="Simoes I.C."/>
            <person name="Simon D."/>
            <person name="Soares C.M.A."/>
            <person name="Soares R.B.A."/>
            <person name="Souza E.M."/>
            <person name="Souza K.R.L."/>
            <person name="Souza R.C."/>
            <person name="Steffens M.B.R."/>
            <person name="Steindel M."/>
            <person name="Teixeira S.R."/>
            <person name="Urmenyi T."/>
            <person name="Vettore A."/>
            <person name="Wassem R."/>
            <person name="Zaha A."/>
            <person name="Simpson A.J.G."/>
        </authorList>
    </citation>
    <scope>NUCLEOTIDE SEQUENCE [LARGE SCALE GENOMIC DNA]</scope>
    <source>
        <strain evidence="6">ATCC 12472 / DSM 30191 / JCM 1249 / CCUG 213 / NBRC 12614 / NCIMB 9131 / NCTC 9757 / MK</strain>
    </source>
</reference>
<reference evidence="7 8" key="2">
    <citation type="journal article" date="2014" name="Biochemistry">
        <title>Prospecting for unannotated enzymes: discovery of a 3',5'-nucleotide bisphosphate phosphatase within the amidohydrolase superfamily.</title>
        <authorList>
            <person name="Cummings J.A."/>
            <person name="Vetting M."/>
            <person name="Ghodge S.V."/>
            <person name="Xu C."/>
            <person name="Hillerich B."/>
            <person name="Seidel R.D."/>
            <person name="Almo S.C."/>
            <person name="Raushel F.M."/>
        </authorList>
    </citation>
    <scope>X-RAY CRYSTALLOGRAPHY (1.90 ANGSTROMS) IN COMPLEX WITH AMP AND MANGANESE</scope>
    <scope>FUNCTION</scope>
    <scope>CATALYTIC ACTIVITY</scope>
    <scope>BIOPHYSICOCHEMICAL PROPERTIES</scope>
    <scope>COFACTOR</scope>
    <scope>SUBUNIT</scope>
</reference>
<sequence>MANIDLHFHSRTSDGALTPTEVIDRAAARAPALLALTDHDCTGGLAEAAAAAARRGIPFLNGVEVSVSWGRHTVHIVGLGIDPAEPALAAGLKSIREGRLERARQMGASLEAAGIAGCFDGAMRWCDNPEMISRTHFARHLVDSGAVKDMRTVFRKYLTPGKPGYVSHQWASLEDAVGWIVGAGGMAVIAHPGRYDMGRTLIERLILDFQAAGGQGIEVASGSHSLDDMHKFALHADRHGLYASSGSDFHAPGEGGRDVGHTEDLPPICRPIWRELEARILRPAD</sequence>
<organism>
    <name type="scientific">Chromobacterium violaceum (strain ATCC 12472 / DSM 30191 / JCM 1249 / CCUG 213 / NBRC 12614 / NCIMB 9131 / NCTC 9757 / MK)</name>
    <dbReference type="NCBI Taxonomy" id="243365"/>
    <lineage>
        <taxon>Bacteria</taxon>
        <taxon>Pseudomonadati</taxon>
        <taxon>Pseudomonadota</taxon>
        <taxon>Betaproteobacteria</taxon>
        <taxon>Neisseriales</taxon>
        <taxon>Chromobacteriaceae</taxon>
        <taxon>Chromobacterium</taxon>
    </lineage>
</organism>
<dbReference type="EC" id="3.1.3.97" evidence="1"/>
<dbReference type="EMBL" id="AE016825">
    <property type="protein sequence ID" value="AAQ59368.1"/>
    <property type="molecule type" value="Genomic_DNA"/>
</dbReference>
<dbReference type="RefSeq" id="WP_011135245.1">
    <property type="nucleotide sequence ID" value="NC_005085.1"/>
</dbReference>
<dbReference type="PDB" id="2YB1">
    <property type="method" value="X-ray"/>
    <property type="resolution" value="1.90 A"/>
    <property type="chains" value="A=1-285"/>
</dbReference>
<dbReference type="PDB" id="2YB4">
    <property type="method" value="X-ray"/>
    <property type="resolution" value="2.20 A"/>
    <property type="chains" value="A=1-285"/>
</dbReference>
<dbReference type="PDBsum" id="2YB1"/>
<dbReference type="PDBsum" id="2YB4"/>
<dbReference type="SMR" id="Q7NXD4"/>
<dbReference type="STRING" id="243365.CV_1693"/>
<dbReference type="KEGG" id="cvi:CV_1693"/>
<dbReference type="eggNOG" id="COG0613">
    <property type="taxonomic scope" value="Bacteria"/>
</dbReference>
<dbReference type="HOGENOM" id="CLU_067347_0_0_4"/>
<dbReference type="OrthoDB" id="9804333at2"/>
<dbReference type="BRENDA" id="3.1.3.7">
    <property type="organism ID" value="1370"/>
</dbReference>
<dbReference type="SABIO-RK" id="Q7NXD4"/>
<dbReference type="EvolutionaryTrace" id="Q7NXD4"/>
<dbReference type="Proteomes" id="UP000001424">
    <property type="component" value="Chromosome"/>
</dbReference>
<dbReference type="GO" id="GO:0097657">
    <property type="term" value="F:3',5'-nucleotide bisphosphate phosphatase activity"/>
    <property type="evidence" value="ECO:0000314"/>
    <property type="project" value="UniProtKB"/>
</dbReference>
<dbReference type="GO" id="GO:0035312">
    <property type="term" value="F:5'-3' DNA exonuclease activity"/>
    <property type="evidence" value="ECO:0007669"/>
    <property type="project" value="TreeGrafter"/>
</dbReference>
<dbReference type="GO" id="GO:0004534">
    <property type="term" value="F:5'-3' RNA exonuclease activity"/>
    <property type="evidence" value="ECO:0007669"/>
    <property type="project" value="TreeGrafter"/>
</dbReference>
<dbReference type="GO" id="GO:0030145">
    <property type="term" value="F:manganese ion binding"/>
    <property type="evidence" value="ECO:0000314"/>
    <property type="project" value="UniProtKB"/>
</dbReference>
<dbReference type="GO" id="GO:0000166">
    <property type="term" value="F:nucleotide binding"/>
    <property type="evidence" value="ECO:0007669"/>
    <property type="project" value="UniProtKB-KW"/>
</dbReference>
<dbReference type="GO" id="GO:0016311">
    <property type="term" value="P:dephosphorylation"/>
    <property type="evidence" value="ECO:0000314"/>
    <property type="project" value="UniProtKB"/>
</dbReference>
<dbReference type="CDD" id="cd07438">
    <property type="entry name" value="PHP_HisPPase_AMP"/>
    <property type="match status" value="1"/>
</dbReference>
<dbReference type="Gene3D" id="1.10.150.650">
    <property type="match status" value="1"/>
</dbReference>
<dbReference type="Gene3D" id="3.20.20.140">
    <property type="entry name" value="Metal-dependent hydrolases"/>
    <property type="match status" value="1"/>
</dbReference>
<dbReference type="InterPro" id="IPR049742">
    <property type="entry name" value="35NBP"/>
</dbReference>
<dbReference type="InterPro" id="IPR004013">
    <property type="entry name" value="PHP_dom"/>
</dbReference>
<dbReference type="InterPro" id="IPR052018">
    <property type="entry name" value="PHP_domain"/>
</dbReference>
<dbReference type="InterPro" id="IPR003141">
    <property type="entry name" value="Pol/His_phosphatase_N"/>
</dbReference>
<dbReference type="InterPro" id="IPR016195">
    <property type="entry name" value="Pol/histidinol_Pase-like"/>
</dbReference>
<dbReference type="NCBIfam" id="NF041577">
    <property type="entry name" value="nside_bi_sphtase"/>
    <property type="match status" value="1"/>
</dbReference>
<dbReference type="PANTHER" id="PTHR42924">
    <property type="entry name" value="EXONUCLEASE"/>
    <property type="match status" value="1"/>
</dbReference>
<dbReference type="PANTHER" id="PTHR42924:SF3">
    <property type="entry name" value="POLYMERASE_HISTIDINOL PHOSPHATASE N-TERMINAL DOMAIN-CONTAINING PROTEIN"/>
    <property type="match status" value="1"/>
</dbReference>
<dbReference type="Pfam" id="PF02811">
    <property type="entry name" value="PHP"/>
    <property type="match status" value="1"/>
</dbReference>
<dbReference type="SMART" id="SM00481">
    <property type="entry name" value="POLIIIAc"/>
    <property type="match status" value="1"/>
</dbReference>
<dbReference type="SUPFAM" id="SSF89550">
    <property type="entry name" value="PHP domain-like"/>
    <property type="match status" value="1"/>
</dbReference>
<accession>Q7NXD4</accession>
<proteinExistence type="evidence at protein level"/>
<comment type="function">
    <text evidence="1">Hydrolyzes 3',5'-bisphosphonucleosides (pGp, pCp, pUp, and pIp) to nucleoside 5'-phosphate and orthophosphate. Has similar catalytic efficiencies with all the bases. Also shows activity with ribonucleoside 2'-deoxyribonucleoside 3',5'-bisphosphates. Does not show activity with nucleoside 2',5'-bisphosphates.</text>
</comment>
<comment type="catalytic activity">
    <reaction evidence="1">
        <text>a ribonucleoside 3',5'-bisphosphate + H2O = a ribonucleoside 5'-phosphate + phosphate</text>
        <dbReference type="Rhea" id="RHEA:43532"/>
        <dbReference type="ChEBI" id="CHEBI:15377"/>
        <dbReference type="ChEBI" id="CHEBI:43474"/>
        <dbReference type="ChEBI" id="CHEBI:58043"/>
        <dbReference type="ChEBI" id="CHEBI:83402"/>
        <dbReference type="EC" id="3.1.3.97"/>
    </reaction>
</comment>
<comment type="cofactor">
    <cofactor evidence="1">
        <name>Mn(2+)</name>
        <dbReference type="ChEBI" id="CHEBI:29035"/>
    </cofactor>
    <text evidence="1">Binds 3 Mn(2+) ions per subunit.</text>
</comment>
<comment type="biophysicochemical properties">
    <kinetics>
        <KM evidence="1">15.5 uM for pAp</KM>
        <KM evidence="1">10.2 uM for 2'-deoxy-pAp</KM>
        <KM evidence="1">14 uM for pCp</KM>
        <KM evidence="1">26 uM for 2'-deoxy-pCp</KM>
        <KM evidence="1">17.3 uM for pGp</KM>
        <KM evidence="1">5.2 uM for 2'-deoxy-pGp</KM>
        <KM evidence="1">8.8 uM for pUp</KM>
        <KM evidence="1">29 uM for 2'-deoxy-pUp</KM>
        <KM evidence="1">9.3 uM for pTp</KM>
        <KM evidence="1">22 uM for 2'-deoxy-pIp</KM>
        <KM evidence="1">1.6 uM for pApA</KM>
        <KM evidence="1">5.4 uM for N(6)-methyl-3',5'-pAp</KM>
        <text evidence="1">kcat is 22 sec(-1) for pAp. kcat is 7.1 sec(-1) for 2'-deoxy-pAp. kcat is 8.6 sec(-1) for pCp. kcat is 9.4 sec(-1) for 2'-deoxy-pCp. kcat is 12.3 sec(-1) for pGp. kcat is 4.2 sec(-1) for 2'-deoxy-pGp. kcat is 5.4 sec(-1) for pUp. kcat is 5.2 sec(-1) for 2'-deoxy-pUp. kcat is 3.3 sec(-1) for pTp. kcat is 4.3 sec(-1) for 2'-deoxy-pIp. kcat is 0.05 sec(-1) for pApA. kcat is 11.6 sec(-1) for N(6)-methyl-3',5'-pAp.</text>
    </kinetics>
</comment>
<comment type="subunit">
    <text evidence="4">Monomer.</text>
</comment>
<comment type="similarity">
    <text evidence="3">Belongs to the PHP family.</text>
</comment>